<accession>B0U1N1</accession>
<comment type="function">
    <text evidence="1">Component of the acetyl coenzyme A carboxylase (ACC) complex. First, biotin carboxylase catalyzes the carboxylation of biotin on its carrier protein (BCCP) and then the CO(2) group is transferred by the carboxyltransferase to acetyl-CoA to form malonyl-CoA.</text>
</comment>
<comment type="catalytic activity">
    <reaction evidence="1">
        <text>N(6)-carboxybiotinyl-L-lysyl-[protein] + acetyl-CoA = N(6)-biotinyl-L-lysyl-[protein] + malonyl-CoA</text>
        <dbReference type="Rhea" id="RHEA:54728"/>
        <dbReference type="Rhea" id="RHEA-COMP:10505"/>
        <dbReference type="Rhea" id="RHEA-COMP:10506"/>
        <dbReference type="ChEBI" id="CHEBI:57288"/>
        <dbReference type="ChEBI" id="CHEBI:57384"/>
        <dbReference type="ChEBI" id="CHEBI:83144"/>
        <dbReference type="ChEBI" id="CHEBI:83145"/>
        <dbReference type="EC" id="2.1.3.15"/>
    </reaction>
</comment>
<comment type="pathway">
    <text evidence="1">Lipid metabolism; malonyl-CoA biosynthesis; malonyl-CoA from acetyl-CoA: step 1/1.</text>
</comment>
<comment type="subunit">
    <text evidence="1">Acetyl-CoA carboxylase is a heterohexamer composed of biotin carboxyl carrier protein (AccB), biotin carboxylase (AccC) and two subunits each of ACCase subunit alpha (AccA) and ACCase subunit beta (AccD).</text>
</comment>
<comment type="subcellular location">
    <subcellularLocation>
        <location evidence="1">Cytoplasm</location>
    </subcellularLocation>
</comment>
<comment type="similarity">
    <text evidence="1">Belongs to the AccA family.</text>
</comment>
<gene>
    <name evidence="1" type="primary">accA</name>
    <name type="ordered locus">Xfasm12_0173</name>
</gene>
<organism>
    <name type="scientific">Xylella fastidiosa (strain M12)</name>
    <dbReference type="NCBI Taxonomy" id="405440"/>
    <lineage>
        <taxon>Bacteria</taxon>
        <taxon>Pseudomonadati</taxon>
        <taxon>Pseudomonadota</taxon>
        <taxon>Gammaproteobacteria</taxon>
        <taxon>Lysobacterales</taxon>
        <taxon>Lysobacteraceae</taxon>
        <taxon>Xylella</taxon>
    </lineage>
</organism>
<keyword id="KW-0067">ATP-binding</keyword>
<keyword id="KW-0963">Cytoplasm</keyword>
<keyword id="KW-0275">Fatty acid biosynthesis</keyword>
<keyword id="KW-0276">Fatty acid metabolism</keyword>
<keyword id="KW-0444">Lipid biosynthesis</keyword>
<keyword id="KW-0443">Lipid metabolism</keyword>
<keyword id="KW-0547">Nucleotide-binding</keyword>
<keyword id="KW-0808">Transferase</keyword>
<protein>
    <recommendedName>
        <fullName evidence="1">Acetyl-coenzyme A carboxylase carboxyl transferase subunit alpha</fullName>
        <shortName evidence="1">ACCase subunit alpha</shortName>
        <shortName evidence="1">Acetyl-CoA carboxylase carboxyltransferase subunit alpha</shortName>
        <ecNumber evidence="1">2.1.3.15</ecNumber>
    </recommendedName>
</protein>
<sequence>MNPNYLDFEQPIADLEAKIQELRTASAGPSVNVDTEVRALENKLRLRTAQIFRNLSAWQISQLARHPRRPYTLDYISVVCDEFQELAGDRTLADDKAIVGGLARIGHRPVMLIGHQKGRDNKERLMRNFGMPKPEGYRKALRLMKLAERFGLPLLTFIDTMGAWPGIDAEERNQSEAIATNLIEMAELKIPVICTVIGEGGSGGALAIGIGDRTLMLEYSTYSVITPEGCASILWKDAAKASDAAEQLNLTARRLKEFGLIDKVIREPIGGAHRNPQQMANRLKAVLLNELEALDKVPLVTLLNQRHKRLRTYGAYENH</sequence>
<feature type="chain" id="PRO_1000134539" description="Acetyl-coenzyme A carboxylase carboxyl transferase subunit alpha">
    <location>
        <begin position="1"/>
        <end position="319"/>
    </location>
</feature>
<feature type="domain" description="CoA carboxyltransferase C-terminal" evidence="2">
    <location>
        <begin position="32"/>
        <end position="293"/>
    </location>
</feature>
<name>ACCA_XYLFM</name>
<dbReference type="EC" id="2.1.3.15" evidence="1"/>
<dbReference type="EMBL" id="CP000941">
    <property type="protein sequence ID" value="ACA11209.1"/>
    <property type="molecule type" value="Genomic_DNA"/>
</dbReference>
<dbReference type="RefSeq" id="WP_012337572.1">
    <property type="nucleotide sequence ID" value="NC_010513.1"/>
</dbReference>
<dbReference type="SMR" id="B0U1N1"/>
<dbReference type="KEGG" id="xfm:Xfasm12_0173"/>
<dbReference type="HOGENOM" id="CLU_015486_0_2_6"/>
<dbReference type="UniPathway" id="UPA00655">
    <property type="reaction ID" value="UER00711"/>
</dbReference>
<dbReference type="GO" id="GO:0009317">
    <property type="term" value="C:acetyl-CoA carboxylase complex"/>
    <property type="evidence" value="ECO:0007669"/>
    <property type="project" value="InterPro"/>
</dbReference>
<dbReference type="GO" id="GO:0003989">
    <property type="term" value="F:acetyl-CoA carboxylase activity"/>
    <property type="evidence" value="ECO:0007669"/>
    <property type="project" value="InterPro"/>
</dbReference>
<dbReference type="GO" id="GO:0005524">
    <property type="term" value="F:ATP binding"/>
    <property type="evidence" value="ECO:0007669"/>
    <property type="project" value="UniProtKB-KW"/>
</dbReference>
<dbReference type="GO" id="GO:0016743">
    <property type="term" value="F:carboxyl- or carbamoyltransferase activity"/>
    <property type="evidence" value="ECO:0007669"/>
    <property type="project" value="UniProtKB-UniRule"/>
</dbReference>
<dbReference type="GO" id="GO:0006633">
    <property type="term" value="P:fatty acid biosynthetic process"/>
    <property type="evidence" value="ECO:0007669"/>
    <property type="project" value="UniProtKB-KW"/>
</dbReference>
<dbReference type="GO" id="GO:2001295">
    <property type="term" value="P:malonyl-CoA biosynthetic process"/>
    <property type="evidence" value="ECO:0007669"/>
    <property type="project" value="UniProtKB-UniRule"/>
</dbReference>
<dbReference type="Gene3D" id="3.90.226.10">
    <property type="entry name" value="2-enoyl-CoA Hydratase, Chain A, domain 1"/>
    <property type="match status" value="1"/>
</dbReference>
<dbReference type="HAMAP" id="MF_00823">
    <property type="entry name" value="AcetylCoA_CT_alpha"/>
    <property type="match status" value="1"/>
</dbReference>
<dbReference type="InterPro" id="IPR001095">
    <property type="entry name" value="Acetyl_CoA_COase_a_su"/>
</dbReference>
<dbReference type="InterPro" id="IPR029045">
    <property type="entry name" value="ClpP/crotonase-like_dom_sf"/>
</dbReference>
<dbReference type="InterPro" id="IPR011763">
    <property type="entry name" value="COA_CT_C"/>
</dbReference>
<dbReference type="NCBIfam" id="TIGR00513">
    <property type="entry name" value="accA"/>
    <property type="match status" value="1"/>
</dbReference>
<dbReference type="NCBIfam" id="NF041504">
    <property type="entry name" value="AccA_sub"/>
    <property type="match status" value="1"/>
</dbReference>
<dbReference type="NCBIfam" id="NF004344">
    <property type="entry name" value="PRK05724.1"/>
    <property type="match status" value="1"/>
</dbReference>
<dbReference type="PANTHER" id="PTHR42853">
    <property type="entry name" value="ACETYL-COENZYME A CARBOXYLASE CARBOXYL TRANSFERASE SUBUNIT ALPHA"/>
    <property type="match status" value="1"/>
</dbReference>
<dbReference type="PANTHER" id="PTHR42853:SF3">
    <property type="entry name" value="ACETYL-COENZYME A CARBOXYLASE CARBOXYL TRANSFERASE SUBUNIT ALPHA, CHLOROPLASTIC"/>
    <property type="match status" value="1"/>
</dbReference>
<dbReference type="Pfam" id="PF03255">
    <property type="entry name" value="ACCA"/>
    <property type="match status" value="1"/>
</dbReference>
<dbReference type="PRINTS" id="PR01069">
    <property type="entry name" value="ACCCTRFRASEA"/>
</dbReference>
<dbReference type="SUPFAM" id="SSF52096">
    <property type="entry name" value="ClpP/crotonase"/>
    <property type="match status" value="1"/>
</dbReference>
<dbReference type="PROSITE" id="PS50989">
    <property type="entry name" value="COA_CT_CTER"/>
    <property type="match status" value="1"/>
</dbReference>
<proteinExistence type="inferred from homology"/>
<reference key="1">
    <citation type="journal article" date="2010" name="J. Bacteriol.">
        <title>Whole genome sequences of two Xylella fastidiosa strains (M12 and M23) causing almond leaf scorch disease in California.</title>
        <authorList>
            <person name="Chen J."/>
            <person name="Xie G."/>
            <person name="Han S."/>
            <person name="Chertkov O."/>
            <person name="Sims D."/>
            <person name="Civerolo E.L."/>
        </authorList>
    </citation>
    <scope>NUCLEOTIDE SEQUENCE [LARGE SCALE GENOMIC DNA]</scope>
    <source>
        <strain>M12</strain>
    </source>
</reference>
<evidence type="ECO:0000255" key="1">
    <source>
        <dbReference type="HAMAP-Rule" id="MF_00823"/>
    </source>
</evidence>
<evidence type="ECO:0000255" key="2">
    <source>
        <dbReference type="PROSITE-ProRule" id="PRU01137"/>
    </source>
</evidence>